<keyword id="KW-0028">Amino-acid biosynthesis</keyword>
<keyword id="KW-0963">Cytoplasm</keyword>
<keyword id="KW-0368">Histidine biosynthesis</keyword>
<keyword id="KW-0456">Lyase</keyword>
<keyword id="KW-1185">Reference proteome</keyword>
<name>HIS6_MYCBO</name>
<feature type="chain" id="PRO_0000142182" description="Imidazole glycerol phosphate synthase subunit HisF">
    <location>
        <begin position="1"/>
        <end position="267"/>
    </location>
</feature>
<feature type="active site" evidence="1">
    <location>
        <position position="22"/>
    </location>
</feature>
<feature type="active site" evidence="1">
    <location>
        <position position="141"/>
    </location>
</feature>
<reference key="1">
    <citation type="journal article" date="2003" name="Proc. Natl. Acad. Sci. U.S.A.">
        <title>The complete genome sequence of Mycobacterium bovis.</title>
        <authorList>
            <person name="Garnier T."/>
            <person name="Eiglmeier K."/>
            <person name="Camus J.-C."/>
            <person name="Medina N."/>
            <person name="Mansoor H."/>
            <person name="Pryor M."/>
            <person name="Duthoy S."/>
            <person name="Grondin S."/>
            <person name="Lacroix C."/>
            <person name="Monsempe C."/>
            <person name="Simon S."/>
            <person name="Harris B."/>
            <person name="Atkin R."/>
            <person name="Doggett J."/>
            <person name="Mayes R."/>
            <person name="Keating L."/>
            <person name="Wheeler P.R."/>
            <person name="Parkhill J."/>
            <person name="Barrell B.G."/>
            <person name="Cole S.T."/>
            <person name="Gordon S.V."/>
            <person name="Hewinson R.G."/>
        </authorList>
    </citation>
    <scope>NUCLEOTIDE SEQUENCE [LARGE SCALE GENOMIC DNA]</scope>
    <source>
        <strain>ATCC BAA-935 / AF2122/97</strain>
    </source>
</reference>
<reference key="2">
    <citation type="journal article" date="2017" name="Genome Announc.">
        <title>Updated reference genome sequence and annotation of Mycobacterium bovis AF2122/97.</title>
        <authorList>
            <person name="Malone K.M."/>
            <person name="Farrell D."/>
            <person name="Stuber T.P."/>
            <person name="Schubert O.T."/>
            <person name="Aebersold R."/>
            <person name="Robbe-Austerman S."/>
            <person name="Gordon S.V."/>
        </authorList>
    </citation>
    <scope>NUCLEOTIDE SEQUENCE [LARGE SCALE GENOMIC DNA]</scope>
    <scope>GENOME REANNOTATION</scope>
    <source>
        <strain>ATCC BAA-935 / AF2122/97</strain>
    </source>
</reference>
<evidence type="ECO:0000255" key="1">
    <source>
        <dbReference type="HAMAP-Rule" id="MF_01013"/>
    </source>
</evidence>
<comment type="function">
    <text evidence="1">IGPS catalyzes the conversion of PRFAR and glutamine to IGP, AICAR and glutamate. The HisF subunit catalyzes the cyclization activity that produces IGP and AICAR from PRFAR using the ammonia provided by the HisH subunit.</text>
</comment>
<comment type="catalytic activity">
    <reaction evidence="1">
        <text>5-[(5-phospho-1-deoxy-D-ribulos-1-ylimino)methylamino]-1-(5-phospho-beta-D-ribosyl)imidazole-4-carboxamide + L-glutamine = D-erythro-1-(imidazol-4-yl)glycerol 3-phosphate + 5-amino-1-(5-phospho-beta-D-ribosyl)imidazole-4-carboxamide + L-glutamate + H(+)</text>
        <dbReference type="Rhea" id="RHEA:24793"/>
        <dbReference type="ChEBI" id="CHEBI:15378"/>
        <dbReference type="ChEBI" id="CHEBI:29985"/>
        <dbReference type="ChEBI" id="CHEBI:58278"/>
        <dbReference type="ChEBI" id="CHEBI:58359"/>
        <dbReference type="ChEBI" id="CHEBI:58475"/>
        <dbReference type="ChEBI" id="CHEBI:58525"/>
        <dbReference type="EC" id="4.3.2.10"/>
    </reaction>
</comment>
<comment type="pathway">
    <text evidence="1">Amino-acid biosynthesis; L-histidine biosynthesis; L-histidine from 5-phospho-alpha-D-ribose 1-diphosphate: step 5/9.</text>
</comment>
<comment type="subunit">
    <text evidence="1">Heterodimer of HisH and HisF.</text>
</comment>
<comment type="subcellular location">
    <subcellularLocation>
        <location evidence="1">Cytoplasm</location>
    </subcellularLocation>
</comment>
<comment type="similarity">
    <text evidence="1">Belongs to the HisA/HisF family.</text>
</comment>
<protein>
    <recommendedName>
        <fullName evidence="1">Imidazole glycerol phosphate synthase subunit HisF</fullName>
        <ecNumber evidence="1">4.3.2.10</ecNumber>
    </recommendedName>
    <alternativeName>
        <fullName evidence="1">IGP synthase cyclase subunit</fullName>
    </alternativeName>
    <alternativeName>
        <fullName evidence="1">IGP synthase subunit HisF</fullName>
    </alternativeName>
    <alternativeName>
        <fullName evidence="1">ImGP synthase subunit HisF</fullName>
        <shortName evidence="1">IGPS subunit HisF</shortName>
    </alternativeName>
</protein>
<proteinExistence type="inferred from homology"/>
<dbReference type="EC" id="4.3.2.10" evidence="1"/>
<dbReference type="EMBL" id="LT708304">
    <property type="protein sequence ID" value="SIU00235.1"/>
    <property type="molecule type" value="Genomic_DNA"/>
</dbReference>
<dbReference type="RefSeq" id="NP_855284.1">
    <property type="nucleotide sequence ID" value="NC_002945.3"/>
</dbReference>
<dbReference type="RefSeq" id="WP_003407959.1">
    <property type="nucleotide sequence ID" value="NC_002945.4"/>
</dbReference>
<dbReference type="SMR" id="Q7VEW8"/>
<dbReference type="KEGG" id="mbo:BQ2027_MB1631"/>
<dbReference type="PATRIC" id="fig|233413.5.peg.1780"/>
<dbReference type="UniPathway" id="UPA00031">
    <property type="reaction ID" value="UER00010"/>
</dbReference>
<dbReference type="Proteomes" id="UP000001419">
    <property type="component" value="Chromosome"/>
</dbReference>
<dbReference type="GO" id="GO:0005737">
    <property type="term" value="C:cytoplasm"/>
    <property type="evidence" value="ECO:0007669"/>
    <property type="project" value="UniProtKB-SubCell"/>
</dbReference>
<dbReference type="GO" id="GO:0000107">
    <property type="term" value="F:imidazoleglycerol-phosphate synthase activity"/>
    <property type="evidence" value="ECO:0007669"/>
    <property type="project" value="UniProtKB-UniRule"/>
</dbReference>
<dbReference type="GO" id="GO:0016829">
    <property type="term" value="F:lyase activity"/>
    <property type="evidence" value="ECO:0007669"/>
    <property type="project" value="UniProtKB-KW"/>
</dbReference>
<dbReference type="GO" id="GO:0000105">
    <property type="term" value="P:L-histidine biosynthetic process"/>
    <property type="evidence" value="ECO:0007669"/>
    <property type="project" value="UniProtKB-UniRule"/>
</dbReference>
<dbReference type="CDD" id="cd04731">
    <property type="entry name" value="HisF"/>
    <property type="match status" value="1"/>
</dbReference>
<dbReference type="FunFam" id="3.20.20.70:FF:000006">
    <property type="entry name" value="Imidazole glycerol phosphate synthase subunit HisF"/>
    <property type="match status" value="1"/>
</dbReference>
<dbReference type="Gene3D" id="3.20.20.70">
    <property type="entry name" value="Aldolase class I"/>
    <property type="match status" value="1"/>
</dbReference>
<dbReference type="HAMAP" id="MF_01013">
    <property type="entry name" value="HisF"/>
    <property type="match status" value="1"/>
</dbReference>
<dbReference type="InterPro" id="IPR013785">
    <property type="entry name" value="Aldolase_TIM"/>
</dbReference>
<dbReference type="InterPro" id="IPR006062">
    <property type="entry name" value="His_biosynth"/>
</dbReference>
<dbReference type="InterPro" id="IPR004651">
    <property type="entry name" value="HisF"/>
</dbReference>
<dbReference type="InterPro" id="IPR050064">
    <property type="entry name" value="IGPS_HisA/HisF"/>
</dbReference>
<dbReference type="InterPro" id="IPR011060">
    <property type="entry name" value="RibuloseP-bd_barrel"/>
</dbReference>
<dbReference type="NCBIfam" id="TIGR00735">
    <property type="entry name" value="hisF"/>
    <property type="match status" value="1"/>
</dbReference>
<dbReference type="PANTHER" id="PTHR21235:SF2">
    <property type="entry name" value="IMIDAZOLE GLYCEROL PHOSPHATE SYNTHASE HISHF"/>
    <property type="match status" value="1"/>
</dbReference>
<dbReference type="PANTHER" id="PTHR21235">
    <property type="entry name" value="IMIDAZOLE GLYCEROL PHOSPHATE SYNTHASE SUBUNIT HISF/H IGP SYNTHASE SUBUNIT HISF/H"/>
    <property type="match status" value="1"/>
</dbReference>
<dbReference type="Pfam" id="PF00977">
    <property type="entry name" value="His_biosynth"/>
    <property type="match status" value="1"/>
</dbReference>
<dbReference type="SUPFAM" id="SSF51366">
    <property type="entry name" value="Ribulose-phoshate binding barrel"/>
    <property type="match status" value="1"/>
</dbReference>
<accession>Q7VEW8</accession>
<accession>A0A1R3XYT1</accession>
<accession>X2BIT7</accession>
<gene>
    <name evidence="1" type="primary">hisF</name>
    <name type="ordered locus">BQ2027_MB1631</name>
</gene>
<sequence>MYADRDLPGAGGLAVRVIPCLDVDDGRVVKGVNFENLRDAGDPVELAAVYDAEGADELTFLDVTASSSGRATMLEVVRRTAEQVFIPLTVGGGVRTVADVDSLLRAGADKVAVNTAAIACLDLLADMARQFGSQCIVLSVDARTVPVGSAPTPSGWEVTTHGGRRGTGMDAVQWAARGADLGVGEILLNSMDADGTKAGFDLALLRAVRAAVTVPVIASGGAGAVEHFAPAVAAGADAVLAASVFHFRELTIGQVKAALAAEGITVR</sequence>
<organism>
    <name type="scientific">Mycobacterium bovis (strain ATCC BAA-935 / AF2122/97)</name>
    <dbReference type="NCBI Taxonomy" id="233413"/>
    <lineage>
        <taxon>Bacteria</taxon>
        <taxon>Bacillati</taxon>
        <taxon>Actinomycetota</taxon>
        <taxon>Actinomycetes</taxon>
        <taxon>Mycobacteriales</taxon>
        <taxon>Mycobacteriaceae</taxon>
        <taxon>Mycobacterium</taxon>
        <taxon>Mycobacterium tuberculosis complex</taxon>
    </lineage>
</organism>